<comment type="function">
    <text>Hormone found in the sinus gland of isopods and decapods which controls the blood sugar level. Has a secretagogue action over the amylase released from the midgut gland. May act as a stress hormone and may be involved in the control of molting and reproduction.</text>
</comment>
<comment type="subcellular location">
    <subcellularLocation>
        <location>Secreted</location>
    </subcellularLocation>
</comment>
<comment type="tissue specificity">
    <text>Produced by the medulla terminalis X-organ in the eyestalks and transported to the sinus gland where they are stored and released.</text>
</comment>
<comment type="similarity">
    <text evidence="4">Belongs to the arthropod CHH/MIH/GIH/VIH hormone family.</text>
</comment>
<name>CHH5_PENJP</name>
<sequence length="125" mass="13979">MKPGNTSFNMVSFRMVWTAMMATLLVAGASSAGTRSSEDLSAPEDRSLSKRLVFDPSCAGVYDRVLLGKLNRLCDDCYNVFREPNVATECRSNCFYNLAFVQCLEYLMPPSLHEEYQANVQMVGK</sequence>
<organism>
    <name type="scientific">Penaeus japonicus</name>
    <name type="common">Kuruma prawn</name>
    <name type="synonym">Marsupenaeus japonicus</name>
    <dbReference type="NCBI Taxonomy" id="27405"/>
    <lineage>
        <taxon>Eukaryota</taxon>
        <taxon>Metazoa</taxon>
        <taxon>Ecdysozoa</taxon>
        <taxon>Arthropoda</taxon>
        <taxon>Crustacea</taxon>
        <taxon>Multicrustacea</taxon>
        <taxon>Malacostraca</taxon>
        <taxon>Eumalacostraca</taxon>
        <taxon>Eucarida</taxon>
        <taxon>Decapoda</taxon>
        <taxon>Dendrobranchiata</taxon>
        <taxon>Penaeoidea</taxon>
        <taxon>Penaeidae</taxon>
        <taxon>Penaeus</taxon>
    </lineage>
</organism>
<protein>
    <recommendedName>
        <fullName>Crustacean hyperglycemic hormones 5</fullName>
    </recommendedName>
    <alternativeName>
        <fullName>Pej-SGP-V</fullName>
    </alternativeName>
    <component>
        <recommendedName>
            <fullName>CHH precursor-related peptide 5</fullName>
            <shortName>CPRP 5</shortName>
        </recommendedName>
    </component>
    <component>
        <recommendedName>
            <fullName>Crustacean hyperglycemic hormone 5</fullName>
            <shortName>CHH 5</shortName>
        </recommendedName>
    </component>
</protein>
<dbReference type="EMBL" id="AB007508">
    <property type="protein sequence ID" value="BAA22561.1"/>
    <property type="molecule type" value="mRNA"/>
</dbReference>
<dbReference type="SMR" id="O15981"/>
<dbReference type="OrthoDB" id="6330469at2759"/>
<dbReference type="GO" id="GO:0005576">
    <property type="term" value="C:extracellular region"/>
    <property type="evidence" value="ECO:0007669"/>
    <property type="project" value="UniProtKB-SubCell"/>
</dbReference>
<dbReference type="GO" id="GO:0005184">
    <property type="term" value="F:neuropeptide hormone activity"/>
    <property type="evidence" value="ECO:0007669"/>
    <property type="project" value="InterPro"/>
</dbReference>
<dbReference type="GO" id="GO:0007623">
    <property type="term" value="P:circadian rhythm"/>
    <property type="evidence" value="ECO:0007669"/>
    <property type="project" value="TreeGrafter"/>
</dbReference>
<dbReference type="GO" id="GO:0006006">
    <property type="term" value="P:glucose metabolic process"/>
    <property type="evidence" value="ECO:0007669"/>
    <property type="project" value="UniProtKB-KW"/>
</dbReference>
<dbReference type="GO" id="GO:0007218">
    <property type="term" value="P:neuropeptide signaling pathway"/>
    <property type="evidence" value="ECO:0007669"/>
    <property type="project" value="UniProtKB-KW"/>
</dbReference>
<dbReference type="Gene3D" id="1.10.2010.10">
    <property type="entry name" value="Crustacean CHH/MIH/GIH neurohormone"/>
    <property type="match status" value="1"/>
</dbReference>
<dbReference type="InterPro" id="IPR018251">
    <property type="entry name" value="Crust_neurhormone_CS"/>
</dbReference>
<dbReference type="InterPro" id="IPR031098">
    <property type="entry name" value="Crust_neurohorm"/>
</dbReference>
<dbReference type="InterPro" id="IPR035957">
    <property type="entry name" value="Crust_neurohorm_sf"/>
</dbReference>
<dbReference type="InterPro" id="IPR001166">
    <property type="entry name" value="Hyperglycemic"/>
</dbReference>
<dbReference type="InterPro" id="IPR000346">
    <property type="entry name" value="Hyperglycemic1"/>
</dbReference>
<dbReference type="PANTHER" id="PTHR35981">
    <property type="entry name" value="ION TRANSPORT PEPTIDE, ISOFORM C"/>
    <property type="match status" value="1"/>
</dbReference>
<dbReference type="PANTHER" id="PTHR35981:SF2">
    <property type="entry name" value="ION TRANSPORT PEPTIDE, ISOFORM C"/>
    <property type="match status" value="1"/>
</dbReference>
<dbReference type="Pfam" id="PF01147">
    <property type="entry name" value="Crust_neurohorm"/>
    <property type="match status" value="1"/>
</dbReference>
<dbReference type="PRINTS" id="PR00548">
    <property type="entry name" value="HYPRGLYCEMC1"/>
</dbReference>
<dbReference type="PRINTS" id="PR00550">
    <property type="entry name" value="HYPRGLYCEMIC"/>
</dbReference>
<dbReference type="SUPFAM" id="SSF81778">
    <property type="entry name" value="Crustacean CHH/MIH/GIH neurohormone"/>
    <property type="match status" value="1"/>
</dbReference>
<dbReference type="PROSITE" id="PS01250">
    <property type="entry name" value="CHH_MIH_GIH"/>
    <property type="match status" value="1"/>
</dbReference>
<proteinExistence type="evidence at protein level"/>
<reference key="1">
    <citation type="book" date="1998" name="Proceedings of the XIII international congress of comparative endocrinology">
        <title>Molecular cloning of cDNAs encoding four crustacean hyperglycemic hormones and a molt-inhibiting hormone from the kuruma prawn Penaeus japonicus.</title>
        <authorList>
            <person name="Ohira T."/>
            <person name="Watanabe T."/>
            <person name="Nagasawa H."/>
            <person name="Aida K."/>
        </authorList>
    </citation>
    <scope>NUCLEOTIDE SEQUENCE [MRNA]</scope>
    <source>
        <tissue>Eyestalk</tissue>
    </source>
</reference>
<reference key="2">
    <citation type="journal article" date="1997" name="Peptides">
        <title>Amino acid sequences and activities of multiple hyperglycemic hormones from the kuruma prawn, Penaeus japonicus.</title>
        <authorList>
            <person name="Yang W.-J."/>
            <person name="Aida K."/>
            <person name="Nagasawa H."/>
        </authorList>
    </citation>
    <scope>PROTEIN SEQUENCE OF 52-123</scope>
    <scope>AMIDATION AT VAL-123</scope>
    <source>
        <tissue>Sinus gland</tissue>
    </source>
</reference>
<reference key="3">
    <citation type="journal article" date="1995" name="Aquaculture">
        <title>Amino acid sequences of a hyperglycaemic hormone and its related peptides from the kuruma prawn, Penaeus japonicus.</title>
        <authorList>
            <person name="Yang W.-J."/>
            <person name="Aida K."/>
            <person name="Nagasawa H."/>
        </authorList>
    </citation>
    <scope>PROTEIN SEQUENCE OF 52-121</scope>
    <source>
        <tissue>Sinus gland</tissue>
    </source>
</reference>
<feature type="signal peptide" evidence="2">
    <location>
        <begin position="1"/>
        <end position="34"/>
    </location>
</feature>
<feature type="peptide" id="PRO_0000019057" description="CHH precursor-related peptide 5">
    <location>
        <begin position="35"/>
        <end position="49"/>
    </location>
</feature>
<feature type="peptide" id="PRO_0000019058" description="Crustacean hyperglycemic hormone 5">
    <location>
        <begin position="52"/>
        <end position="123"/>
    </location>
</feature>
<feature type="modified residue" description="Valine amide" evidence="3">
    <location>
        <position position="123"/>
    </location>
</feature>
<feature type="disulfide bond" evidence="1">
    <location>
        <begin position="58"/>
        <end position="94"/>
    </location>
</feature>
<feature type="disulfide bond" evidence="1">
    <location>
        <begin position="74"/>
        <end position="90"/>
    </location>
</feature>
<feature type="disulfide bond" evidence="1">
    <location>
        <begin position="77"/>
        <end position="103"/>
    </location>
</feature>
<keyword id="KW-0027">Amidation</keyword>
<keyword id="KW-0119">Carbohydrate metabolism</keyword>
<keyword id="KW-0165">Cleavage on pair of basic residues</keyword>
<keyword id="KW-0903">Direct protein sequencing</keyword>
<keyword id="KW-1015">Disulfide bond</keyword>
<keyword id="KW-0313">Glucose metabolism</keyword>
<keyword id="KW-0372">Hormone</keyword>
<keyword id="KW-0527">Neuropeptide</keyword>
<keyword id="KW-0964">Secreted</keyword>
<keyword id="KW-0732">Signal</keyword>
<evidence type="ECO:0000250" key="1"/>
<evidence type="ECO:0000255" key="2"/>
<evidence type="ECO:0000269" key="3">
    <source>
    </source>
</evidence>
<evidence type="ECO:0000305" key="4"/>
<accession>O15981</accession>